<gene>
    <name evidence="1" type="primary">orn</name>
    <name type="ordered locus">Rmag_0111</name>
</gene>
<dbReference type="EC" id="3.1.15.-" evidence="1"/>
<dbReference type="EMBL" id="CP000488">
    <property type="protein sequence ID" value="ABL01907.1"/>
    <property type="molecule type" value="Genomic_DNA"/>
</dbReference>
<dbReference type="RefSeq" id="WP_011737533.1">
    <property type="nucleotide sequence ID" value="NC_008610.1"/>
</dbReference>
<dbReference type="SMR" id="A1AVF0"/>
<dbReference type="STRING" id="413404.Rmag_0111"/>
<dbReference type="KEGG" id="rma:Rmag_0111"/>
<dbReference type="eggNOG" id="COG1949">
    <property type="taxonomic scope" value="Bacteria"/>
</dbReference>
<dbReference type="HOGENOM" id="CLU_064761_2_0_6"/>
<dbReference type="OrthoDB" id="9801329at2"/>
<dbReference type="Proteomes" id="UP000002587">
    <property type="component" value="Chromosome"/>
</dbReference>
<dbReference type="GO" id="GO:0005737">
    <property type="term" value="C:cytoplasm"/>
    <property type="evidence" value="ECO:0007669"/>
    <property type="project" value="UniProtKB-SubCell"/>
</dbReference>
<dbReference type="GO" id="GO:0000175">
    <property type="term" value="F:3'-5'-RNA exonuclease activity"/>
    <property type="evidence" value="ECO:0007669"/>
    <property type="project" value="InterPro"/>
</dbReference>
<dbReference type="GO" id="GO:0003676">
    <property type="term" value="F:nucleic acid binding"/>
    <property type="evidence" value="ECO:0007669"/>
    <property type="project" value="InterPro"/>
</dbReference>
<dbReference type="GO" id="GO:0006259">
    <property type="term" value="P:DNA metabolic process"/>
    <property type="evidence" value="ECO:0007669"/>
    <property type="project" value="UniProtKB-ARBA"/>
</dbReference>
<dbReference type="CDD" id="cd06135">
    <property type="entry name" value="Orn"/>
    <property type="match status" value="1"/>
</dbReference>
<dbReference type="FunFam" id="3.30.420.10:FF:000003">
    <property type="entry name" value="Oligoribonuclease"/>
    <property type="match status" value="1"/>
</dbReference>
<dbReference type="Gene3D" id="3.30.420.10">
    <property type="entry name" value="Ribonuclease H-like superfamily/Ribonuclease H"/>
    <property type="match status" value="1"/>
</dbReference>
<dbReference type="HAMAP" id="MF_00045">
    <property type="entry name" value="Oligoribonuclease"/>
    <property type="match status" value="1"/>
</dbReference>
<dbReference type="InterPro" id="IPR013520">
    <property type="entry name" value="Exonuclease_RNaseT/DNA_pol3"/>
</dbReference>
<dbReference type="InterPro" id="IPR022894">
    <property type="entry name" value="Oligoribonuclease"/>
</dbReference>
<dbReference type="InterPro" id="IPR012337">
    <property type="entry name" value="RNaseH-like_sf"/>
</dbReference>
<dbReference type="InterPro" id="IPR036397">
    <property type="entry name" value="RNaseH_sf"/>
</dbReference>
<dbReference type="NCBIfam" id="NF003765">
    <property type="entry name" value="PRK05359.1"/>
    <property type="match status" value="1"/>
</dbReference>
<dbReference type="PANTHER" id="PTHR11046">
    <property type="entry name" value="OLIGORIBONUCLEASE, MITOCHONDRIAL"/>
    <property type="match status" value="1"/>
</dbReference>
<dbReference type="PANTHER" id="PTHR11046:SF0">
    <property type="entry name" value="OLIGORIBONUCLEASE, MITOCHONDRIAL"/>
    <property type="match status" value="1"/>
</dbReference>
<dbReference type="Pfam" id="PF00929">
    <property type="entry name" value="RNase_T"/>
    <property type="match status" value="1"/>
</dbReference>
<dbReference type="SMART" id="SM00479">
    <property type="entry name" value="EXOIII"/>
    <property type="match status" value="1"/>
</dbReference>
<dbReference type="SUPFAM" id="SSF53098">
    <property type="entry name" value="Ribonuclease H-like"/>
    <property type="match status" value="1"/>
</dbReference>
<name>ORN_RUTMC</name>
<reference key="1">
    <citation type="journal article" date="2007" name="Science">
        <title>The Calyptogena magnifica chemoautotrophic symbiont genome.</title>
        <authorList>
            <person name="Newton I.L.G."/>
            <person name="Woyke T."/>
            <person name="Auchtung T.A."/>
            <person name="Dilly G.F."/>
            <person name="Dutton R.J."/>
            <person name="Fisher M.C."/>
            <person name="Fontanez K.M."/>
            <person name="Lau E."/>
            <person name="Stewart F.J."/>
            <person name="Richardson P.M."/>
            <person name="Barry K.W."/>
            <person name="Saunders E."/>
            <person name="Detter J.C."/>
            <person name="Wu D."/>
            <person name="Eisen J.A."/>
            <person name="Cavanaugh C.M."/>
        </authorList>
    </citation>
    <scope>NUCLEOTIDE SEQUENCE [LARGE SCALE GENOMIC DNA]</scope>
</reference>
<keyword id="KW-0963">Cytoplasm</keyword>
<keyword id="KW-0269">Exonuclease</keyword>
<keyword id="KW-0378">Hydrolase</keyword>
<keyword id="KW-0540">Nuclease</keyword>
<evidence type="ECO:0000255" key="1">
    <source>
        <dbReference type="HAMAP-Rule" id="MF_00045"/>
    </source>
</evidence>
<proteinExistence type="inferred from homology"/>
<feature type="chain" id="PRO_1000004281" description="Oligoribonuclease">
    <location>
        <begin position="1"/>
        <end position="180"/>
    </location>
</feature>
<feature type="domain" description="Exonuclease" evidence="1">
    <location>
        <begin position="7"/>
        <end position="170"/>
    </location>
</feature>
<feature type="active site" evidence="1">
    <location>
        <position position="128"/>
    </location>
</feature>
<accession>A1AVF0</accession>
<comment type="function">
    <text evidence="1">3'-to-5' exoribonuclease specific for small oligoribonucleotides.</text>
</comment>
<comment type="subcellular location">
    <subcellularLocation>
        <location evidence="1">Cytoplasm</location>
    </subcellularLocation>
</comment>
<comment type="similarity">
    <text evidence="1">Belongs to the oligoribonuclease family.</text>
</comment>
<sequence>MNKKTNLIWIDLEMTGLIPEKDVIIEIATIVTNVQLHIIAQGPSLVIHQNDEILSNMDQWNTEHHTSSGLLRRVRESSLSCKQAEAQTLEFLKKYVHTGASPMCGNTICQDRRFLYNYMPTLERFFHYRHIDVSTLKELVIRWKPNAKMIFEKDSAHLALSDIQDSIDELKHYRNVFINV</sequence>
<organism>
    <name type="scientific">Ruthia magnifica subsp. Calyptogena magnifica</name>
    <dbReference type="NCBI Taxonomy" id="413404"/>
    <lineage>
        <taxon>Bacteria</taxon>
        <taxon>Pseudomonadati</taxon>
        <taxon>Pseudomonadota</taxon>
        <taxon>Gammaproteobacteria</taxon>
        <taxon>Candidatus Pseudothioglobaceae</taxon>
        <taxon>Candidatus Ruthturnera</taxon>
    </lineage>
</organism>
<protein>
    <recommendedName>
        <fullName evidence="1">Oligoribonuclease</fullName>
        <ecNumber evidence="1">3.1.15.-</ecNumber>
    </recommendedName>
</protein>